<feature type="chain" id="PRO_1000195132" description="Holliday junction branch migration complex subunit RuvA">
    <location>
        <begin position="1"/>
        <end position="209"/>
    </location>
</feature>
<feature type="region of interest" description="Domain I" evidence="1">
    <location>
        <begin position="1"/>
        <end position="70"/>
    </location>
</feature>
<feature type="region of interest" description="Domain II" evidence="1">
    <location>
        <begin position="71"/>
        <end position="149"/>
    </location>
</feature>
<feature type="region of interest" description="Flexible linker" evidence="1">
    <location>
        <begin position="150"/>
        <end position="160"/>
    </location>
</feature>
<feature type="region of interest" description="Domain III" evidence="1">
    <location>
        <begin position="160"/>
        <end position="209"/>
    </location>
</feature>
<organism>
    <name type="scientific">Gloeothece citriformis (strain PCC 7424)</name>
    <name type="common">Cyanothece sp. (strain PCC 7424)</name>
    <dbReference type="NCBI Taxonomy" id="65393"/>
    <lineage>
        <taxon>Bacteria</taxon>
        <taxon>Bacillati</taxon>
        <taxon>Cyanobacteriota</taxon>
        <taxon>Cyanophyceae</taxon>
        <taxon>Oscillatoriophycideae</taxon>
        <taxon>Chroococcales</taxon>
        <taxon>Aphanothecaceae</taxon>
        <taxon>Gloeothece</taxon>
        <taxon>Gloeothece citriformis</taxon>
    </lineage>
</organism>
<evidence type="ECO:0000255" key="1">
    <source>
        <dbReference type="HAMAP-Rule" id="MF_00031"/>
    </source>
</evidence>
<sequence>MINYLKGKTTQILKTPSNRNILILEVNHIGYEIQIPSRLARNLSLEEDQIVQIFTHLQIREDQQILYGFSTDSERDLFRQLININGVGTQTAIALIDTLGIEALINAIVTNDVKTLSKTPGVGPKTAERIALELKSKLSQWEQAIALKTPVSVGVPSREILEEVEMTLLALGYTDEEIDQAISAISQDNLLLKNPHVEEWLKSAIAWLS</sequence>
<accession>B7K970</accession>
<dbReference type="EMBL" id="CP001291">
    <property type="protein sequence ID" value="ACK72839.1"/>
    <property type="molecule type" value="Genomic_DNA"/>
</dbReference>
<dbReference type="RefSeq" id="WP_015956423.1">
    <property type="nucleotide sequence ID" value="NC_011729.1"/>
</dbReference>
<dbReference type="SMR" id="B7K970"/>
<dbReference type="STRING" id="65393.PCC7424_4475"/>
<dbReference type="KEGG" id="cyc:PCC7424_4475"/>
<dbReference type="eggNOG" id="COG0632">
    <property type="taxonomic scope" value="Bacteria"/>
</dbReference>
<dbReference type="HOGENOM" id="CLU_087936_0_0_3"/>
<dbReference type="OrthoDB" id="5293449at2"/>
<dbReference type="Proteomes" id="UP000002384">
    <property type="component" value="Chromosome"/>
</dbReference>
<dbReference type="GO" id="GO:0005737">
    <property type="term" value="C:cytoplasm"/>
    <property type="evidence" value="ECO:0007669"/>
    <property type="project" value="UniProtKB-SubCell"/>
</dbReference>
<dbReference type="GO" id="GO:0009379">
    <property type="term" value="C:Holliday junction helicase complex"/>
    <property type="evidence" value="ECO:0007669"/>
    <property type="project" value="InterPro"/>
</dbReference>
<dbReference type="GO" id="GO:0048476">
    <property type="term" value="C:Holliday junction resolvase complex"/>
    <property type="evidence" value="ECO:0007669"/>
    <property type="project" value="UniProtKB-UniRule"/>
</dbReference>
<dbReference type="GO" id="GO:0005524">
    <property type="term" value="F:ATP binding"/>
    <property type="evidence" value="ECO:0007669"/>
    <property type="project" value="InterPro"/>
</dbReference>
<dbReference type="GO" id="GO:0000400">
    <property type="term" value="F:four-way junction DNA binding"/>
    <property type="evidence" value="ECO:0007669"/>
    <property type="project" value="UniProtKB-UniRule"/>
</dbReference>
<dbReference type="GO" id="GO:0009378">
    <property type="term" value="F:four-way junction helicase activity"/>
    <property type="evidence" value="ECO:0007669"/>
    <property type="project" value="InterPro"/>
</dbReference>
<dbReference type="GO" id="GO:0006310">
    <property type="term" value="P:DNA recombination"/>
    <property type="evidence" value="ECO:0007669"/>
    <property type="project" value="UniProtKB-UniRule"/>
</dbReference>
<dbReference type="GO" id="GO:0006281">
    <property type="term" value="P:DNA repair"/>
    <property type="evidence" value="ECO:0007669"/>
    <property type="project" value="UniProtKB-UniRule"/>
</dbReference>
<dbReference type="CDD" id="cd14332">
    <property type="entry name" value="UBA_RuvA_C"/>
    <property type="match status" value="1"/>
</dbReference>
<dbReference type="Gene3D" id="1.10.150.20">
    <property type="entry name" value="5' to 3' exonuclease, C-terminal subdomain"/>
    <property type="match status" value="1"/>
</dbReference>
<dbReference type="Gene3D" id="2.40.50.140">
    <property type="entry name" value="Nucleic acid-binding proteins"/>
    <property type="match status" value="1"/>
</dbReference>
<dbReference type="HAMAP" id="MF_00031">
    <property type="entry name" value="DNA_HJ_migration_RuvA"/>
    <property type="match status" value="1"/>
</dbReference>
<dbReference type="InterPro" id="IPR013849">
    <property type="entry name" value="DNA_helicase_Holl-junc_RuvA_I"/>
</dbReference>
<dbReference type="InterPro" id="IPR003583">
    <property type="entry name" value="Hlx-hairpin-Hlx_DNA-bd_motif"/>
</dbReference>
<dbReference type="InterPro" id="IPR012340">
    <property type="entry name" value="NA-bd_OB-fold"/>
</dbReference>
<dbReference type="InterPro" id="IPR000085">
    <property type="entry name" value="RuvA"/>
</dbReference>
<dbReference type="InterPro" id="IPR010994">
    <property type="entry name" value="RuvA_2-like"/>
</dbReference>
<dbReference type="InterPro" id="IPR011114">
    <property type="entry name" value="RuvA_C"/>
</dbReference>
<dbReference type="InterPro" id="IPR036267">
    <property type="entry name" value="RuvA_C_sf"/>
</dbReference>
<dbReference type="NCBIfam" id="TIGR00084">
    <property type="entry name" value="ruvA"/>
    <property type="match status" value="1"/>
</dbReference>
<dbReference type="Pfam" id="PF14520">
    <property type="entry name" value="HHH_5"/>
    <property type="match status" value="1"/>
</dbReference>
<dbReference type="Pfam" id="PF07499">
    <property type="entry name" value="RuvA_C"/>
    <property type="match status" value="1"/>
</dbReference>
<dbReference type="Pfam" id="PF01330">
    <property type="entry name" value="RuvA_N"/>
    <property type="match status" value="1"/>
</dbReference>
<dbReference type="SMART" id="SM00278">
    <property type="entry name" value="HhH1"/>
    <property type="match status" value="2"/>
</dbReference>
<dbReference type="SUPFAM" id="SSF46929">
    <property type="entry name" value="DNA helicase RuvA subunit, C-terminal domain"/>
    <property type="match status" value="1"/>
</dbReference>
<dbReference type="SUPFAM" id="SSF50249">
    <property type="entry name" value="Nucleic acid-binding proteins"/>
    <property type="match status" value="1"/>
</dbReference>
<dbReference type="SUPFAM" id="SSF47781">
    <property type="entry name" value="RuvA domain 2-like"/>
    <property type="match status" value="1"/>
</dbReference>
<reference key="1">
    <citation type="journal article" date="2011" name="MBio">
        <title>Novel metabolic attributes of the genus Cyanothece, comprising a group of unicellular nitrogen-fixing Cyanobacteria.</title>
        <authorList>
            <person name="Bandyopadhyay A."/>
            <person name="Elvitigala T."/>
            <person name="Welsh E."/>
            <person name="Stockel J."/>
            <person name="Liberton M."/>
            <person name="Min H."/>
            <person name="Sherman L.A."/>
            <person name="Pakrasi H.B."/>
        </authorList>
    </citation>
    <scope>NUCLEOTIDE SEQUENCE [LARGE SCALE GENOMIC DNA]</scope>
    <source>
        <strain>PCC 7424</strain>
    </source>
</reference>
<name>RUVA_GLOC7</name>
<protein>
    <recommendedName>
        <fullName evidence="1">Holliday junction branch migration complex subunit RuvA</fullName>
    </recommendedName>
</protein>
<comment type="function">
    <text evidence="1">The RuvA-RuvB-RuvC complex processes Holliday junction (HJ) DNA during genetic recombination and DNA repair, while the RuvA-RuvB complex plays an important role in the rescue of blocked DNA replication forks via replication fork reversal (RFR). RuvA specifically binds to HJ cruciform DNA, conferring on it an open structure. The RuvB hexamer acts as an ATP-dependent pump, pulling dsDNA into and through the RuvAB complex. HJ branch migration allows RuvC to scan DNA until it finds its consensus sequence, where it cleaves and resolves the cruciform DNA.</text>
</comment>
<comment type="subunit">
    <text evidence="1">Homotetramer. Forms an RuvA(8)-RuvB(12)-Holliday junction (HJ) complex. HJ DNA is sandwiched between 2 RuvA tetramers; dsDNA enters through RuvA and exits via RuvB. An RuvB hexamer assembles on each DNA strand where it exits the tetramer. Each RuvB hexamer is contacted by two RuvA subunits (via domain III) on 2 adjacent RuvB subunits; this complex drives branch migration. In the full resolvosome a probable DNA-RuvA(4)-RuvB(12)-RuvC(2) complex forms which resolves the HJ.</text>
</comment>
<comment type="subcellular location">
    <subcellularLocation>
        <location evidence="1">Cytoplasm</location>
    </subcellularLocation>
</comment>
<comment type="domain">
    <text evidence="1">Has three domains with a flexible linker between the domains II and III and assumes an 'L' shape. Domain III is highly mobile and contacts RuvB.</text>
</comment>
<comment type="similarity">
    <text evidence="1">Belongs to the RuvA family.</text>
</comment>
<keyword id="KW-0963">Cytoplasm</keyword>
<keyword id="KW-0227">DNA damage</keyword>
<keyword id="KW-0233">DNA recombination</keyword>
<keyword id="KW-0234">DNA repair</keyword>
<keyword id="KW-0238">DNA-binding</keyword>
<keyword id="KW-1185">Reference proteome</keyword>
<gene>
    <name evidence="1" type="primary">ruvA</name>
    <name type="ordered locus">PCC7424_4475</name>
</gene>
<proteinExistence type="inferred from homology"/>